<gene>
    <name evidence="1" type="primary">glyA1</name>
    <name type="ordered locus">BPSL2758</name>
</gene>
<protein>
    <recommendedName>
        <fullName evidence="1">Serine hydroxymethyltransferase 1</fullName>
        <shortName evidence="1">SHMT 1</shortName>
        <shortName evidence="1">Serine methylase 1</shortName>
        <ecNumber evidence="1">2.1.2.1</ecNumber>
    </recommendedName>
</protein>
<reference key="1">
    <citation type="journal article" date="2004" name="Proc. Natl. Acad. Sci. U.S.A.">
        <title>Genomic plasticity of the causative agent of melioidosis, Burkholderia pseudomallei.</title>
        <authorList>
            <person name="Holden M.T.G."/>
            <person name="Titball R.W."/>
            <person name="Peacock S.J."/>
            <person name="Cerdeno-Tarraga A.-M."/>
            <person name="Atkins T."/>
            <person name="Crossman L.C."/>
            <person name="Pitt T."/>
            <person name="Churcher C."/>
            <person name="Mungall K.L."/>
            <person name="Bentley S.D."/>
            <person name="Sebaihia M."/>
            <person name="Thomson N.R."/>
            <person name="Bason N."/>
            <person name="Beacham I.R."/>
            <person name="Brooks K."/>
            <person name="Brown K.A."/>
            <person name="Brown N.F."/>
            <person name="Challis G.L."/>
            <person name="Cherevach I."/>
            <person name="Chillingworth T."/>
            <person name="Cronin A."/>
            <person name="Crossett B."/>
            <person name="Davis P."/>
            <person name="DeShazer D."/>
            <person name="Feltwell T."/>
            <person name="Fraser A."/>
            <person name="Hance Z."/>
            <person name="Hauser H."/>
            <person name="Holroyd S."/>
            <person name="Jagels K."/>
            <person name="Keith K.E."/>
            <person name="Maddison M."/>
            <person name="Moule S."/>
            <person name="Price C."/>
            <person name="Quail M.A."/>
            <person name="Rabbinowitsch E."/>
            <person name="Rutherford K."/>
            <person name="Sanders M."/>
            <person name="Simmonds M."/>
            <person name="Songsivilai S."/>
            <person name="Stevens K."/>
            <person name="Tumapa S."/>
            <person name="Vesaratchavest M."/>
            <person name="Whitehead S."/>
            <person name="Yeats C."/>
            <person name="Barrell B.G."/>
            <person name="Oyston P.C.F."/>
            <person name="Parkhill J."/>
        </authorList>
    </citation>
    <scope>NUCLEOTIDE SEQUENCE [LARGE SCALE GENOMIC DNA]</scope>
    <source>
        <strain>K96243</strain>
    </source>
</reference>
<organism>
    <name type="scientific">Burkholderia pseudomallei (strain K96243)</name>
    <dbReference type="NCBI Taxonomy" id="272560"/>
    <lineage>
        <taxon>Bacteria</taxon>
        <taxon>Pseudomonadati</taxon>
        <taxon>Pseudomonadota</taxon>
        <taxon>Betaproteobacteria</taxon>
        <taxon>Burkholderiales</taxon>
        <taxon>Burkholderiaceae</taxon>
        <taxon>Burkholderia</taxon>
        <taxon>pseudomallei group</taxon>
    </lineage>
</organism>
<proteinExistence type="inferred from homology"/>
<feature type="chain" id="PRO_0000113552" description="Serine hydroxymethyltransferase 1">
    <location>
        <begin position="1"/>
        <end position="415"/>
    </location>
</feature>
<feature type="binding site" evidence="1">
    <location>
        <position position="122"/>
    </location>
    <ligand>
        <name>(6S)-5,6,7,8-tetrahydrofolate</name>
        <dbReference type="ChEBI" id="CHEBI:57453"/>
    </ligand>
</feature>
<feature type="binding site" evidence="1">
    <location>
        <begin position="126"/>
        <end position="128"/>
    </location>
    <ligand>
        <name>(6S)-5,6,7,8-tetrahydrofolate</name>
        <dbReference type="ChEBI" id="CHEBI:57453"/>
    </ligand>
</feature>
<feature type="site" description="Plays an important role in substrate specificity" evidence="1">
    <location>
        <position position="229"/>
    </location>
</feature>
<feature type="modified residue" description="N6-(pyridoxal phosphate)lysine" evidence="1">
    <location>
        <position position="230"/>
    </location>
</feature>
<sequence>MFDRAQSTIANVDPEIWQAIQQENVRQEEHIELIASENYTSPAVMAAQGSQLTNKYAEGYPGKRYYGGCEYVDIVEQLAIDRVKALFGAEAANVQPNSGSQANQGVFFAMLKPGDTIMGMSLAHGGHLTHGSPVNMSGKWFNVVSYGLNEAEDIDYEAAEQLAHEHKPKLIVAGASAFALKIDFERLAKIAKAVGAYLMVDMAHYAGLIAAGVYPNPVPHADFVTTTTHKSLRGPRGGVILMKAEYEKQINSAIFPGIQGGPLMHVIAAKAVAFKEALSPEFKEYQQKVVENARVLAQTLVKRGLRIVSGRTESHVMLVDLRAKNITGKAAEAALGNAHITVNKNAIPNDPEKPFVTSGVRLGSPAMTTRGFGPQEAELVGNLIADVLEHPEDAATIERVRAQVAELTKRFPVYR</sequence>
<comment type="function">
    <text evidence="1">Catalyzes the reversible interconversion of serine and glycine with tetrahydrofolate (THF) serving as the one-carbon carrier. This reaction serves as the major source of one-carbon groups required for the biosynthesis of purines, thymidylate, methionine, and other important biomolecules. Also exhibits THF-independent aldolase activity toward beta-hydroxyamino acids, producing glycine and aldehydes, via a retro-aldol mechanism.</text>
</comment>
<comment type="catalytic activity">
    <reaction evidence="1">
        <text>(6R)-5,10-methylene-5,6,7,8-tetrahydrofolate + glycine + H2O = (6S)-5,6,7,8-tetrahydrofolate + L-serine</text>
        <dbReference type="Rhea" id="RHEA:15481"/>
        <dbReference type="ChEBI" id="CHEBI:15377"/>
        <dbReference type="ChEBI" id="CHEBI:15636"/>
        <dbReference type="ChEBI" id="CHEBI:33384"/>
        <dbReference type="ChEBI" id="CHEBI:57305"/>
        <dbReference type="ChEBI" id="CHEBI:57453"/>
        <dbReference type="EC" id="2.1.2.1"/>
    </reaction>
</comment>
<comment type="cofactor">
    <cofactor evidence="1">
        <name>pyridoxal 5'-phosphate</name>
        <dbReference type="ChEBI" id="CHEBI:597326"/>
    </cofactor>
</comment>
<comment type="pathway">
    <text evidence="1">One-carbon metabolism; tetrahydrofolate interconversion.</text>
</comment>
<comment type="pathway">
    <text evidence="1">Amino-acid biosynthesis; glycine biosynthesis; glycine from L-serine: step 1/1.</text>
</comment>
<comment type="subunit">
    <text evidence="1">Homodimer.</text>
</comment>
<comment type="subcellular location">
    <subcellularLocation>
        <location evidence="1">Cytoplasm</location>
    </subcellularLocation>
</comment>
<comment type="similarity">
    <text evidence="1">Belongs to the SHMT family.</text>
</comment>
<keyword id="KW-0028">Amino-acid biosynthesis</keyword>
<keyword id="KW-0963">Cytoplasm</keyword>
<keyword id="KW-0554">One-carbon metabolism</keyword>
<keyword id="KW-0663">Pyridoxal phosphate</keyword>
<keyword id="KW-1185">Reference proteome</keyword>
<keyword id="KW-0808">Transferase</keyword>
<dbReference type="EC" id="2.1.2.1" evidence="1"/>
<dbReference type="EMBL" id="BX571965">
    <property type="protein sequence ID" value="CAH36766.1"/>
    <property type="molecule type" value="Genomic_DNA"/>
</dbReference>
<dbReference type="RefSeq" id="YP_109354.1">
    <property type="nucleotide sequence ID" value="NC_006350.1"/>
</dbReference>
<dbReference type="SMR" id="Q63RB4"/>
<dbReference type="STRING" id="272560.BPSL2758"/>
<dbReference type="KEGG" id="bps:BPSL2758"/>
<dbReference type="PATRIC" id="fig|272560.51.peg.2558"/>
<dbReference type="eggNOG" id="COG0112">
    <property type="taxonomic scope" value="Bacteria"/>
</dbReference>
<dbReference type="UniPathway" id="UPA00193"/>
<dbReference type="UniPathway" id="UPA00288">
    <property type="reaction ID" value="UER01023"/>
</dbReference>
<dbReference type="Proteomes" id="UP000000605">
    <property type="component" value="Chromosome 1"/>
</dbReference>
<dbReference type="GO" id="GO:0005829">
    <property type="term" value="C:cytosol"/>
    <property type="evidence" value="ECO:0007669"/>
    <property type="project" value="TreeGrafter"/>
</dbReference>
<dbReference type="GO" id="GO:0004372">
    <property type="term" value="F:glycine hydroxymethyltransferase activity"/>
    <property type="evidence" value="ECO:0007669"/>
    <property type="project" value="UniProtKB-UniRule"/>
</dbReference>
<dbReference type="GO" id="GO:0030170">
    <property type="term" value="F:pyridoxal phosphate binding"/>
    <property type="evidence" value="ECO:0007669"/>
    <property type="project" value="UniProtKB-UniRule"/>
</dbReference>
<dbReference type="GO" id="GO:0019264">
    <property type="term" value="P:glycine biosynthetic process from serine"/>
    <property type="evidence" value="ECO:0007669"/>
    <property type="project" value="UniProtKB-UniRule"/>
</dbReference>
<dbReference type="GO" id="GO:0035999">
    <property type="term" value="P:tetrahydrofolate interconversion"/>
    <property type="evidence" value="ECO:0007669"/>
    <property type="project" value="UniProtKB-UniRule"/>
</dbReference>
<dbReference type="CDD" id="cd00378">
    <property type="entry name" value="SHMT"/>
    <property type="match status" value="1"/>
</dbReference>
<dbReference type="FunFam" id="3.40.640.10:FF:000001">
    <property type="entry name" value="Serine hydroxymethyltransferase"/>
    <property type="match status" value="1"/>
</dbReference>
<dbReference type="FunFam" id="3.90.1150.10:FF:000003">
    <property type="entry name" value="Serine hydroxymethyltransferase"/>
    <property type="match status" value="1"/>
</dbReference>
<dbReference type="Gene3D" id="3.90.1150.10">
    <property type="entry name" value="Aspartate Aminotransferase, domain 1"/>
    <property type="match status" value="1"/>
</dbReference>
<dbReference type="Gene3D" id="3.40.640.10">
    <property type="entry name" value="Type I PLP-dependent aspartate aminotransferase-like (Major domain)"/>
    <property type="match status" value="1"/>
</dbReference>
<dbReference type="HAMAP" id="MF_00051">
    <property type="entry name" value="SHMT"/>
    <property type="match status" value="1"/>
</dbReference>
<dbReference type="InterPro" id="IPR015424">
    <property type="entry name" value="PyrdxlP-dep_Trfase"/>
</dbReference>
<dbReference type="InterPro" id="IPR015421">
    <property type="entry name" value="PyrdxlP-dep_Trfase_major"/>
</dbReference>
<dbReference type="InterPro" id="IPR015422">
    <property type="entry name" value="PyrdxlP-dep_Trfase_small"/>
</dbReference>
<dbReference type="InterPro" id="IPR001085">
    <property type="entry name" value="Ser_HO-MeTrfase"/>
</dbReference>
<dbReference type="InterPro" id="IPR049943">
    <property type="entry name" value="Ser_HO-MeTrfase-like"/>
</dbReference>
<dbReference type="InterPro" id="IPR019798">
    <property type="entry name" value="Ser_HO-MeTrfase_PLP_BS"/>
</dbReference>
<dbReference type="InterPro" id="IPR039429">
    <property type="entry name" value="SHMT-like_dom"/>
</dbReference>
<dbReference type="NCBIfam" id="NF000586">
    <property type="entry name" value="PRK00011.1"/>
    <property type="match status" value="1"/>
</dbReference>
<dbReference type="PANTHER" id="PTHR11680">
    <property type="entry name" value="SERINE HYDROXYMETHYLTRANSFERASE"/>
    <property type="match status" value="1"/>
</dbReference>
<dbReference type="PANTHER" id="PTHR11680:SF50">
    <property type="entry name" value="SERINE HYDROXYMETHYLTRANSFERASE"/>
    <property type="match status" value="1"/>
</dbReference>
<dbReference type="Pfam" id="PF00464">
    <property type="entry name" value="SHMT"/>
    <property type="match status" value="1"/>
</dbReference>
<dbReference type="PIRSF" id="PIRSF000412">
    <property type="entry name" value="SHMT"/>
    <property type="match status" value="1"/>
</dbReference>
<dbReference type="SUPFAM" id="SSF53383">
    <property type="entry name" value="PLP-dependent transferases"/>
    <property type="match status" value="1"/>
</dbReference>
<dbReference type="PROSITE" id="PS00096">
    <property type="entry name" value="SHMT"/>
    <property type="match status" value="1"/>
</dbReference>
<name>GLYA1_BURPS</name>
<accession>Q63RB4</accession>
<evidence type="ECO:0000255" key="1">
    <source>
        <dbReference type="HAMAP-Rule" id="MF_00051"/>
    </source>
</evidence>